<dbReference type="EMBL" id="CP001154">
    <property type="protein sequence ID" value="ACO75859.1"/>
    <property type="molecule type" value="Genomic_DNA"/>
</dbReference>
<dbReference type="RefSeq" id="WP_012698322.1">
    <property type="nucleotide sequence ID" value="NC_012559.1"/>
</dbReference>
<dbReference type="SMR" id="C1D4R8"/>
<dbReference type="STRING" id="557598.LHK_02881"/>
<dbReference type="KEGG" id="lhk:LHK_02881"/>
<dbReference type="eggNOG" id="COG1678">
    <property type="taxonomic scope" value="Bacteria"/>
</dbReference>
<dbReference type="HOGENOM" id="CLU_057596_1_0_4"/>
<dbReference type="Proteomes" id="UP000002010">
    <property type="component" value="Chromosome"/>
</dbReference>
<dbReference type="GO" id="GO:0005829">
    <property type="term" value="C:cytosol"/>
    <property type="evidence" value="ECO:0007669"/>
    <property type="project" value="TreeGrafter"/>
</dbReference>
<dbReference type="Gene3D" id="3.40.1740.10">
    <property type="entry name" value="VC0467-like"/>
    <property type="match status" value="1"/>
</dbReference>
<dbReference type="HAMAP" id="MF_00758">
    <property type="entry name" value="UPF0301"/>
    <property type="match status" value="1"/>
</dbReference>
<dbReference type="InterPro" id="IPR003774">
    <property type="entry name" value="AlgH-like"/>
</dbReference>
<dbReference type="NCBIfam" id="NF001266">
    <property type="entry name" value="PRK00228.1-1"/>
    <property type="match status" value="1"/>
</dbReference>
<dbReference type="PANTHER" id="PTHR30327">
    <property type="entry name" value="UNCHARACTERIZED PROTEIN YQGE"/>
    <property type="match status" value="1"/>
</dbReference>
<dbReference type="PANTHER" id="PTHR30327:SF1">
    <property type="entry name" value="UPF0301 PROTEIN YQGE"/>
    <property type="match status" value="1"/>
</dbReference>
<dbReference type="Pfam" id="PF02622">
    <property type="entry name" value="DUF179"/>
    <property type="match status" value="1"/>
</dbReference>
<dbReference type="SUPFAM" id="SSF143456">
    <property type="entry name" value="VC0467-like"/>
    <property type="match status" value="1"/>
</dbReference>
<feature type="chain" id="PRO_1000148386" description="UPF0301 protein LHK_02881">
    <location>
        <begin position="1"/>
        <end position="186"/>
    </location>
</feature>
<organism>
    <name type="scientific">Laribacter hongkongensis (strain HLHK9)</name>
    <dbReference type="NCBI Taxonomy" id="557598"/>
    <lineage>
        <taxon>Bacteria</taxon>
        <taxon>Pseudomonadati</taxon>
        <taxon>Pseudomonadota</taxon>
        <taxon>Betaproteobacteria</taxon>
        <taxon>Neisseriales</taxon>
        <taxon>Aquaspirillaceae</taxon>
        <taxon>Laribacter</taxon>
    </lineage>
</organism>
<keyword id="KW-1185">Reference proteome</keyword>
<proteinExistence type="inferred from homology"/>
<comment type="similarity">
    <text evidence="1">Belongs to the UPF0301 (AlgH) family.</text>
</comment>
<name>Y2881_LARHH</name>
<accession>C1D4R8</accession>
<evidence type="ECO:0000255" key="1">
    <source>
        <dbReference type="HAMAP-Rule" id="MF_00758"/>
    </source>
</evidence>
<sequence>MDTLCLSHHFLIAMPDMEDSLFARAVVYMCDHGEQGAMGVIINHGADLTLDSLLGQIGLDGCRPDQVGLPVFVGGPVQSDRGFVLHEPIGNWQSSLTVTDNVALTTSRDVLAAVSHHEGPERLIVTLGYAGWEPGQLEHELAQNAWLTVPADMRIVFDLPVADRYDAAIRLLGIEPSALFGSAGHA</sequence>
<protein>
    <recommendedName>
        <fullName evidence="1">UPF0301 protein LHK_02881</fullName>
    </recommendedName>
</protein>
<gene>
    <name type="ordered locus">LHK_02881</name>
</gene>
<reference key="1">
    <citation type="journal article" date="2009" name="PLoS Genet.">
        <title>The complete genome and proteome of Laribacter hongkongensis reveal potential mechanisms for adaptations to different temperatures and habitats.</title>
        <authorList>
            <person name="Woo P.C.Y."/>
            <person name="Lau S.K.P."/>
            <person name="Tse H."/>
            <person name="Teng J.L.L."/>
            <person name="Curreem S.O."/>
            <person name="Tsang A.K.L."/>
            <person name="Fan R.Y.Y."/>
            <person name="Wong G.K.M."/>
            <person name="Huang Y."/>
            <person name="Loman N.J."/>
            <person name="Snyder L.A.S."/>
            <person name="Cai J.J."/>
            <person name="Huang J.-D."/>
            <person name="Mak W."/>
            <person name="Pallen M.J."/>
            <person name="Lok S."/>
            <person name="Yuen K.-Y."/>
        </authorList>
    </citation>
    <scope>NUCLEOTIDE SEQUENCE [LARGE SCALE GENOMIC DNA]</scope>
    <source>
        <strain>HLHK9</strain>
    </source>
</reference>